<sequence>MAFVASIPAVRIQTSLQSLKGESLKAQKPAAAKQAAFTVVAQAEEKKGRREFVAAAGALFAAFAASPAAFAYSAADANVTGLGGDLSNIDINNANIAVYQKLPGMYPNIAKKIIGGAPYKSVAELYSLDLSEKQKETLRKYEDNFYAGEPVDALGFDSINNGIYK</sequence>
<evidence type="ECO:0000250" key="1">
    <source>
        <dbReference type="UniProtKB" id="Q55332"/>
    </source>
</evidence>
<evidence type="ECO:0000255" key="2"/>
<evidence type="ECO:0000269" key="3">
    <source>
    </source>
</evidence>
<evidence type="ECO:0000303" key="4">
    <source>
    </source>
</evidence>
<evidence type="ECO:0000305" key="5"/>
<evidence type="ECO:0000305" key="6">
    <source>
    </source>
</evidence>
<evidence type="ECO:0000305" key="7">
    <source>
    </source>
</evidence>
<comment type="function">
    <text evidence="1">One of the extrinsic, lumenal subunits of photosystem II (PSII). PSII is a light-driven water plastoquinone oxidoreductase, using light energy to abstract electrons from H(2)O, generating a proton gradient subsequently used for ATP formation. The extrinsic proteins stabilize the structure of photosystem II oxygen-evolving complex (OEC), the ion environment of oxygen evolution and protect the OEC against heat-induced inactivation.</text>
</comment>
<comment type="subunit">
    <text evidence="3 7">PSII is composed of 1 copy each of membrane proteins PsbA, PsbB, PsbC, PsbD, PsbE, PsbF, PsbH, PsbI, PsbJ, PsbK, PsbL, PsbM, PsbT, PsbX, PsbY, PsbZ, Psb30/Ycf12, at least 3 peripheral proteins of the oxygen-evolving complex and a large number of cofactors. It forms dimeric complexes (Probable). This protein is not detected by antibodies against green algal PsbU but it is detected by antibodies against red algal PsbU (PubMed:16176274).</text>
</comment>
<comment type="subcellular location">
    <subcellularLocation>
        <location evidence="6">Plastid</location>
        <location evidence="6">Cyanelle thylakoid membrane</location>
        <topology evidence="6">Peripheral membrane protein</topology>
        <orientation evidence="1">Lumenal side</orientation>
    </subcellularLocation>
</comment>
<comment type="PTM">
    <text evidence="6">Might be translocated into the thylakoid lumen by the Tat system. The position of the transit peptide cleavages have not been experimentally proven.</text>
</comment>
<comment type="similarity">
    <text evidence="5">Belongs to the PsbU family.</text>
</comment>
<accession>Q5CC96</accession>
<name>PSBU_CYAPA</name>
<feature type="transit peptide" description="Cyanelle" evidence="2">
    <location>
        <begin position="1"/>
        <end position="45"/>
    </location>
</feature>
<feature type="transit peptide" description="Thylakoid" evidence="2">
    <location>
        <begin position="46"/>
        <end position="65"/>
    </location>
</feature>
<feature type="chain" id="PRO_0000295789" description="Photosystem II extrinsic protein U, cyanelle">
    <location>
        <begin position="66"/>
        <end position="165"/>
    </location>
</feature>
<dbReference type="EMBL" id="AJ784849">
    <property type="protein sequence ID" value="CAH04957.1"/>
    <property type="molecule type" value="mRNA"/>
</dbReference>
<dbReference type="SMR" id="Q5CC96"/>
<dbReference type="GO" id="GO:0033115">
    <property type="term" value="C:cyanelle thylakoid membrane"/>
    <property type="evidence" value="ECO:0007669"/>
    <property type="project" value="UniProtKB-SubCell"/>
</dbReference>
<dbReference type="GO" id="GO:0019898">
    <property type="term" value="C:extrinsic component of membrane"/>
    <property type="evidence" value="ECO:0007669"/>
    <property type="project" value="InterPro"/>
</dbReference>
<dbReference type="GO" id="GO:0009523">
    <property type="term" value="C:photosystem II"/>
    <property type="evidence" value="ECO:0007669"/>
    <property type="project" value="UniProtKB-KW"/>
</dbReference>
<dbReference type="GO" id="GO:0015979">
    <property type="term" value="P:photosynthesis"/>
    <property type="evidence" value="ECO:0007669"/>
    <property type="project" value="UniProtKB-KW"/>
</dbReference>
<dbReference type="GO" id="GO:0042549">
    <property type="term" value="P:photosystem II stabilization"/>
    <property type="evidence" value="ECO:0007669"/>
    <property type="project" value="InterPro"/>
</dbReference>
<dbReference type="Gene3D" id="1.10.150.320">
    <property type="entry name" value="Photosystem II 12 kDa extrinsic protein"/>
    <property type="match status" value="1"/>
</dbReference>
<dbReference type="InterPro" id="IPR010527">
    <property type="entry name" value="PSII_PsbU"/>
</dbReference>
<dbReference type="NCBIfam" id="NF002708">
    <property type="entry name" value="PRK02515.1"/>
    <property type="match status" value="1"/>
</dbReference>
<dbReference type="Pfam" id="PF06514">
    <property type="entry name" value="PsbU"/>
    <property type="match status" value="1"/>
</dbReference>
<dbReference type="SUPFAM" id="SSF81585">
    <property type="entry name" value="PsbU/PolX domain-like"/>
    <property type="match status" value="1"/>
</dbReference>
<organism>
    <name type="scientific">Cyanophora paradoxa</name>
    <dbReference type="NCBI Taxonomy" id="2762"/>
    <lineage>
        <taxon>Eukaryota</taxon>
        <taxon>Glaucocystophyceae</taxon>
        <taxon>Cyanophoraceae</taxon>
        <taxon>Cyanophora</taxon>
    </lineage>
</organism>
<proteinExistence type="evidence at protein level"/>
<gene>
    <name type="primary">psbU</name>
</gene>
<keyword id="KW-0194">Cyanelle</keyword>
<keyword id="KW-0249">Electron transport</keyword>
<keyword id="KW-0472">Membrane</keyword>
<keyword id="KW-0602">Photosynthesis</keyword>
<keyword id="KW-0604">Photosystem II</keyword>
<keyword id="KW-0934">Plastid</keyword>
<keyword id="KW-0793">Thylakoid</keyword>
<keyword id="KW-0809">Transit peptide</keyword>
<keyword id="KW-0813">Transport</keyword>
<protein>
    <recommendedName>
        <fullName evidence="5">Photosystem II extrinsic protein U, cyanelle</fullName>
        <shortName evidence="4">PsbU</shortName>
    </recommendedName>
    <alternativeName>
        <fullName>Photosystem II 12 kDa extrinsic protein</fullName>
        <shortName evidence="4">PS II complex 12 kDa extrinsic protein</shortName>
    </alternativeName>
</protein>
<reference key="1">
    <citation type="journal article" date="2005" name="FEBS J.">
        <title>Conservative sorting in a primitive plastid. The cyanelle of Cyanophora paradoxa.</title>
        <authorList>
            <person name="Steiner J.M."/>
            <person name="Berghoefer J."/>
            <person name="Yusa F."/>
            <person name="Pompe J.A."/>
            <person name="Kloesgen R.B."/>
            <person name="Loeffelhardt W."/>
        </authorList>
    </citation>
    <scope>NUCLEOTIDE SEQUENCE [MRNA]</scope>
    <scope>CYANELLE IMPORT</scope>
    <scope>SUBCELLULAR LOCATION</scope>
    <source>
        <strain>UTEX LB 555 / Pringsheim</strain>
    </source>
</reference>
<reference key="2">
    <citation type="journal article" date="2005" name="FEBS J.">
        <title>Distribution of the extrinsic proteins as a potential marker for the evolution of photosynthetic oxygen-evolving photosystem II.</title>
        <authorList>
            <person name="Enami I."/>
            <person name="Suzuki T."/>
            <person name="Tada O."/>
            <person name="Nakada Y."/>
            <person name="Nakamura K."/>
            <person name="Tohri A."/>
            <person name="Ohta H."/>
            <person name="Inoue I."/>
            <person name="Shen J.-R."/>
        </authorList>
    </citation>
    <scope>SUBUNIT</scope>
    <scope>ASSOCIATION WITH THYLAKOIDS</scope>
</reference>